<comment type="function">
    <text evidence="1">Binds directly to 16S ribosomal RNA.</text>
</comment>
<comment type="similarity">
    <text evidence="1">Belongs to the bacterial ribosomal protein bS20 family.</text>
</comment>
<sequence>MANTPSAKKRAKQAEKRRSHNASLRSMVRTYIKNVVKAIDAKDAEKAQAAYVLAVPVIDRMADKGIIHKNKAARHKGRLNGHIKALKEAAAA</sequence>
<feature type="chain" id="PRO_1000126498" description="Small ribosomal subunit protein bS20">
    <location>
        <begin position="1"/>
        <end position="92"/>
    </location>
</feature>
<feature type="region of interest" description="Disordered" evidence="2">
    <location>
        <begin position="1"/>
        <end position="23"/>
    </location>
</feature>
<feature type="compositionally biased region" description="Basic residues" evidence="2">
    <location>
        <begin position="7"/>
        <end position="20"/>
    </location>
</feature>
<name>RS20_PSEPW</name>
<evidence type="ECO:0000255" key="1">
    <source>
        <dbReference type="HAMAP-Rule" id="MF_00500"/>
    </source>
</evidence>
<evidence type="ECO:0000256" key="2">
    <source>
        <dbReference type="SAM" id="MobiDB-lite"/>
    </source>
</evidence>
<evidence type="ECO:0000305" key="3"/>
<reference key="1">
    <citation type="submission" date="2008-02" db="EMBL/GenBank/DDBJ databases">
        <title>Complete sequence of Pseudomonas putida W619.</title>
        <authorList>
            <person name="Copeland A."/>
            <person name="Lucas S."/>
            <person name="Lapidus A."/>
            <person name="Barry K."/>
            <person name="Detter J.C."/>
            <person name="Glavina del Rio T."/>
            <person name="Dalin E."/>
            <person name="Tice H."/>
            <person name="Pitluck S."/>
            <person name="Chain P."/>
            <person name="Malfatti S."/>
            <person name="Shin M."/>
            <person name="Vergez L."/>
            <person name="Schmutz J."/>
            <person name="Larimer F."/>
            <person name="Land M."/>
            <person name="Hauser L."/>
            <person name="Kyrpides N."/>
            <person name="Kim E."/>
            <person name="Taghavi S."/>
            <person name="Vangronsveld D."/>
            <person name="van der Lelie D."/>
            <person name="Richardson P."/>
        </authorList>
    </citation>
    <scope>NUCLEOTIDE SEQUENCE [LARGE SCALE GENOMIC DNA]</scope>
    <source>
        <strain>W619</strain>
    </source>
</reference>
<proteinExistence type="inferred from homology"/>
<protein>
    <recommendedName>
        <fullName evidence="1">Small ribosomal subunit protein bS20</fullName>
    </recommendedName>
    <alternativeName>
        <fullName evidence="3">30S ribosomal protein S20</fullName>
    </alternativeName>
</protein>
<accession>B1JF86</accession>
<organism>
    <name type="scientific">Pseudomonas putida (strain W619)</name>
    <dbReference type="NCBI Taxonomy" id="390235"/>
    <lineage>
        <taxon>Bacteria</taxon>
        <taxon>Pseudomonadati</taxon>
        <taxon>Pseudomonadota</taxon>
        <taxon>Gammaproteobacteria</taxon>
        <taxon>Pseudomonadales</taxon>
        <taxon>Pseudomonadaceae</taxon>
        <taxon>Pseudomonas</taxon>
    </lineage>
</organism>
<gene>
    <name evidence="1" type="primary">rpsT</name>
    <name type="ordered locus">PputW619_4562</name>
</gene>
<keyword id="KW-0687">Ribonucleoprotein</keyword>
<keyword id="KW-0689">Ribosomal protein</keyword>
<keyword id="KW-0694">RNA-binding</keyword>
<keyword id="KW-0699">rRNA-binding</keyword>
<dbReference type="EMBL" id="CP000949">
    <property type="protein sequence ID" value="ACA75042.1"/>
    <property type="molecule type" value="Genomic_DNA"/>
</dbReference>
<dbReference type="SMR" id="B1JF86"/>
<dbReference type="STRING" id="390235.PputW619_4562"/>
<dbReference type="KEGG" id="ppw:PputW619_4562"/>
<dbReference type="eggNOG" id="COG0268">
    <property type="taxonomic scope" value="Bacteria"/>
</dbReference>
<dbReference type="HOGENOM" id="CLU_160655_4_0_6"/>
<dbReference type="OrthoDB" id="9807974at2"/>
<dbReference type="GO" id="GO:0005829">
    <property type="term" value="C:cytosol"/>
    <property type="evidence" value="ECO:0007669"/>
    <property type="project" value="TreeGrafter"/>
</dbReference>
<dbReference type="GO" id="GO:0015935">
    <property type="term" value="C:small ribosomal subunit"/>
    <property type="evidence" value="ECO:0007669"/>
    <property type="project" value="TreeGrafter"/>
</dbReference>
<dbReference type="GO" id="GO:0070181">
    <property type="term" value="F:small ribosomal subunit rRNA binding"/>
    <property type="evidence" value="ECO:0007669"/>
    <property type="project" value="TreeGrafter"/>
</dbReference>
<dbReference type="GO" id="GO:0003735">
    <property type="term" value="F:structural constituent of ribosome"/>
    <property type="evidence" value="ECO:0007669"/>
    <property type="project" value="InterPro"/>
</dbReference>
<dbReference type="GO" id="GO:0006412">
    <property type="term" value="P:translation"/>
    <property type="evidence" value="ECO:0007669"/>
    <property type="project" value="UniProtKB-UniRule"/>
</dbReference>
<dbReference type="FunFam" id="1.20.58.110:FF:000001">
    <property type="entry name" value="30S ribosomal protein S20"/>
    <property type="match status" value="1"/>
</dbReference>
<dbReference type="Gene3D" id="1.20.58.110">
    <property type="entry name" value="Ribosomal protein S20"/>
    <property type="match status" value="1"/>
</dbReference>
<dbReference type="HAMAP" id="MF_00500">
    <property type="entry name" value="Ribosomal_bS20"/>
    <property type="match status" value="1"/>
</dbReference>
<dbReference type="InterPro" id="IPR002583">
    <property type="entry name" value="Ribosomal_bS20"/>
</dbReference>
<dbReference type="InterPro" id="IPR036510">
    <property type="entry name" value="Ribosomal_bS20_sf"/>
</dbReference>
<dbReference type="NCBIfam" id="TIGR00029">
    <property type="entry name" value="S20"/>
    <property type="match status" value="1"/>
</dbReference>
<dbReference type="PANTHER" id="PTHR33398">
    <property type="entry name" value="30S RIBOSOMAL PROTEIN S20"/>
    <property type="match status" value="1"/>
</dbReference>
<dbReference type="PANTHER" id="PTHR33398:SF1">
    <property type="entry name" value="SMALL RIBOSOMAL SUBUNIT PROTEIN BS20C"/>
    <property type="match status" value="1"/>
</dbReference>
<dbReference type="Pfam" id="PF01649">
    <property type="entry name" value="Ribosomal_S20p"/>
    <property type="match status" value="1"/>
</dbReference>
<dbReference type="SUPFAM" id="SSF46992">
    <property type="entry name" value="Ribosomal protein S20"/>
    <property type="match status" value="1"/>
</dbReference>